<reference key="1">
    <citation type="journal article" date="2006" name="J. Bacteriol.">
        <title>Pathogenomic sequence analysis of Bacillus cereus and Bacillus thuringiensis isolates closely related to Bacillus anthracis.</title>
        <authorList>
            <person name="Han C.S."/>
            <person name="Xie G."/>
            <person name="Challacombe J.F."/>
            <person name="Altherr M.R."/>
            <person name="Bhotika S.S."/>
            <person name="Bruce D."/>
            <person name="Campbell C.S."/>
            <person name="Campbell M.L."/>
            <person name="Chen J."/>
            <person name="Chertkov O."/>
            <person name="Cleland C."/>
            <person name="Dimitrijevic M."/>
            <person name="Doggett N.A."/>
            <person name="Fawcett J.J."/>
            <person name="Glavina T."/>
            <person name="Goodwin L.A."/>
            <person name="Hill K.K."/>
            <person name="Hitchcock P."/>
            <person name="Jackson P.J."/>
            <person name="Keim P."/>
            <person name="Kewalramani A.R."/>
            <person name="Longmire J."/>
            <person name="Lucas S."/>
            <person name="Malfatti S."/>
            <person name="McMurry K."/>
            <person name="Meincke L.J."/>
            <person name="Misra M."/>
            <person name="Moseman B.L."/>
            <person name="Mundt M."/>
            <person name="Munk A.C."/>
            <person name="Okinaka R.T."/>
            <person name="Parson-Quintana B."/>
            <person name="Reilly L.P."/>
            <person name="Richardson P."/>
            <person name="Robinson D.L."/>
            <person name="Rubin E."/>
            <person name="Saunders E."/>
            <person name="Tapia R."/>
            <person name="Tesmer J.G."/>
            <person name="Thayer N."/>
            <person name="Thompson L.S."/>
            <person name="Tice H."/>
            <person name="Ticknor L.O."/>
            <person name="Wills P.L."/>
            <person name="Brettin T.S."/>
            <person name="Gilna P."/>
        </authorList>
    </citation>
    <scope>NUCLEOTIDE SEQUENCE [LARGE SCALE GENOMIC DNA]</scope>
    <source>
        <strain>97-27</strain>
    </source>
</reference>
<feature type="chain" id="PRO_0000294495" description="UPF0457 protein BT9727_2307">
    <location>
        <begin position="1"/>
        <end position="84"/>
    </location>
</feature>
<protein>
    <recommendedName>
        <fullName>UPF0457 protein BT9727_2307</fullName>
    </recommendedName>
</protein>
<gene>
    <name type="ordered locus">BT9727_2307</name>
</gene>
<proteinExistence type="inferred from homology"/>
<accession>Q6HIJ3</accession>
<sequence length="84" mass="9311">MLGINVKKTKEELIISWQLAKITIPLRDVIEVTEDATYAGVEDTSAIRIGTAYGTTDRILIKTVKQNYVLFTTNKVSILNAINA</sequence>
<dbReference type="EMBL" id="AE017355">
    <property type="protein sequence ID" value="AAT61899.1"/>
    <property type="molecule type" value="Genomic_DNA"/>
</dbReference>
<dbReference type="RefSeq" id="WP_000900688.1">
    <property type="nucleotide sequence ID" value="NC_005957.1"/>
</dbReference>
<dbReference type="RefSeq" id="YP_036633.1">
    <property type="nucleotide sequence ID" value="NC_005957.1"/>
</dbReference>
<dbReference type="KEGG" id="btk:BT9727_2307"/>
<dbReference type="PATRIC" id="fig|281309.8.peg.2442"/>
<dbReference type="HOGENOM" id="CLU_174851_1_0_9"/>
<dbReference type="Proteomes" id="UP000001301">
    <property type="component" value="Chromosome"/>
</dbReference>
<dbReference type="InterPro" id="IPR055365">
    <property type="entry name" value="PH_SunI-like"/>
</dbReference>
<dbReference type="Pfam" id="PF23491">
    <property type="entry name" value="bPH_8"/>
    <property type="match status" value="1"/>
</dbReference>
<name>Y2307_BACHK</name>
<evidence type="ECO:0000305" key="1"/>
<comment type="similarity">
    <text evidence="1">Belongs to the UPF0457 family.</text>
</comment>
<organism>
    <name type="scientific">Bacillus thuringiensis subsp. konkukian (strain 97-27)</name>
    <dbReference type="NCBI Taxonomy" id="281309"/>
    <lineage>
        <taxon>Bacteria</taxon>
        <taxon>Bacillati</taxon>
        <taxon>Bacillota</taxon>
        <taxon>Bacilli</taxon>
        <taxon>Bacillales</taxon>
        <taxon>Bacillaceae</taxon>
        <taxon>Bacillus</taxon>
        <taxon>Bacillus cereus group</taxon>
    </lineage>
</organism>